<name>SMC3_PONAB</name>
<feature type="chain" id="PRO_0000119003" description="Structural maintenance of chromosomes protein 3">
    <location>
        <begin position="1"/>
        <end position="1217"/>
    </location>
</feature>
<feature type="domain" description="SMC hinge">
    <location>
        <begin position="530"/>
        <end position="642"/>
    </location>
</feature>
<feature type="region of interest" description="Disordered" evidence="7">
    <location>
        <begin position="242"/>
        <end position="268"/>
    </location>
</feature>
<feature type="region of interest" description="Disordered" evidence="7">
    <location>
        <begin position="1059"/>
        <end position="1090"/>
    </location>
</feature>
<feature type="coiled-coil region" evidence="6">
    <location>
        <begin position="179"/>
        <end position="350"/>
    </location>
</feature>
<feature type="coiled-coil region" evidence="6">
    <location>
        <begin position="393"/>
        <end position="503"/>
    </location>
</feature>
<feature type="coiled-coil region" evidence="6">
    <location>
        <begin position="669"/>
        <end position="916"/>
    </location>
</feature>
<feature type="coiled-coil region" evidence="6">
    <location>
        <begin position="958"/>
        <end position="989"/>
    </location>
</feature>
<feature type="binding site" evidence="6">
    <location>
        <begin position="32"/>
        <end position="39"/>
    </location>
    <ligand>
        <name>ATP</name>
        <dbReference type="ChEBI" id="CHEBI:30616"/>
    </ligand>
</feature>
<feature type="modified residue" description="N6-acetyllysine" evidence="5">
    <location>
        <position position="105"/>
    </location>
</feature>
<feature type="modified residue" description="N6-acetyllysine" evidence="5">
    <location>
        <position position="106"/>
    </location>
</feature>
<feature type="modified residue" description="N6-acetyllysine" evidence="5">
    <location>
        <position position="140"/>
    </location>
</feature>
<feature type="modified residue" description="Phosphothreonine" evidence="5">
    <location>
        <position position="783"/>
    </location>
</feature>
<feature type="modified residue" description="Phosphoserine" evidence="5">
    <location>
        <position position="787"/>
    </location>
</feature>
<feature type="modified residue" description="Phosphoserine" evidence="5">
    <location>
        <position position="886"/>
    </location>
</feature>
<feature type="modified residue" description="Phosphoserine" evidence="4">
    <location>
        <position position="1013"/>
    </location>
</feature>
<feature type="modified residue" description="Phosphoserine" evidence="5">
    <location>
        <position position="1065"/>
    </location>
</feature>
<feature type="modified residue" description="Phosphoserine" evidence="5">
    <location>
        <position position="1067"/>
    </location>
</feature>
<feature type="modified residue" description="Phosphoserine" evidence="3">
    <location>
        <position position="1074"/>
    </location>
</feature>
<feature type="modified residue" description="Phosphoserine" evidence="5">
    <location>
        <position position="1083"/>
    </location>
</feature>
<feature type="modified residue" description="N6-acetyllysine" evidence="5">
    <location>
        <position position="1190"/>
    </location>
</feature>
<reference key="1">
    <citation type="submission" date="2004-11" db="EMBL/GenBank/DDBJ databases">
        <authorList>
            <consortium name="The German cDNA consortium"/>
        </authorList>
    </citation>
    <scope>NUCLEOTIDE SEQUENCE [LARGE SCALE MRNA]</scope>
    <source>
        <tissue>Brain cortex</tissue>
    </source>
</reference>
<protein>
    <recommendedName>
        <fullName>Structural maintenance of chromosomes protein 3</fullName>
        <shortName>SMC protein 3</shortName>
        <shortName>SMC-3</shortName>
    </recommendedName>
    <alternativeName>
        <fullName>Chondroitin sulfate proteoglycan 6</fullName>
    </alternativeName>
</protein>
<comment type="function">
    <text evidence="1">Central component of cohesin, a complex required for chromosome cohesion during the cell cycle. The cohesin complex may form a large proteinaceous ring within which sister chromatids can be trapped. At anaphase, the complex is cleaved and dissociates from chromatin, allowing sister chromatids to segregate. Cohesion is coupled to DNA replication and is involved in DNA repair. The cohesin complex also plays an important role in spindle pole assembly during mitosis and in chromosomes movement (By similarity).</text>
</comment>
<comment type="subunit">
    <text evidence="2 3 4 5">Forms a heterodimer with SMC1A or SMC1B in cohesin complexes. Cohesin complexes are composed of the SMC1 (SMC1A or meiosis-specific SMC1B) and SMC3 heterodimer attached via their SMC hinge domain, RAD21 which link them, and one STAG protein (STAG1, STAG2 or STAG3), which interacts with RAD21. Also found in meiosis-specific cohesin complexes. Found in a complex with SMC1A, CDCA5 and RAD21, PDS5A/SCC-112 and PDS5B/APRIN. Interacts with MXI1, MXD3 and MXD4. Interacts with NUMA1, and forms a ternary complex with KIF3B and KIFAP3, suggesting a function in tethering the chromosomes to the spindle pole and a function in chromosome movement. Interacts with PDS5A and WAPL; regulated by SMC3 acetylation. Interacts (via SMC hinge domain) with KIAA1328 (via N- and C-terminal domains). Interacts with DDX11, SYCP2, RPGR and STAG3. The cohesin complex interacts with the cohesin loading complex subunits NIPBL/Scc2 (via HEAT repeats) and MAU2/Scc4. NIPBL directly contacts all members of the complex, RAD21, SMC1A/B, SMC3 and STAG1 (By similarity). Interacts with the NuRD complex component HDAC2; the interaction is direct (By similarity).</text>
</comment>
<comment type="subcellular location">
    <subcellularLocation>
        <location evidence="4">Nucleus</location>
    </subcellularLocation>
    <subcellularLocation>
        <location evidence="4">Chromosome</location>
    </subcellularLocation>
    <subcellularLocation>
        <location evidence="4">Chromosome</location>
        <location evidence="4">Centromere</location>
    </subcellularLocation>
    <text evidence="4">Associates with chromatin. Before prophase it is scattered along chromosome arms. During prophase, most of cohesin complexes dissociate from chromatin probably because of phosphorylation by PLK, except at centromeres, where cohesin complexes remain. At anaphase, the RAD21 subunit of the cohesin complex is cleaved, leading to the dissociation of the complex from chromosomes, allowing chromosome separation (By similarity). The phosphorylated form at Ser-1083 is preferentially associated with unsynapsed chromosomal regions (By similarity).</text>
</comment>
<comment type="domain">
    <text evidence="1">The flexible SMC hinge domain, which separates the large intramolecular coiled coil regions, allows the heterotypic interaction with the corresponding domain of SMC1A or SMC1B, forming a V-shaped heterodimer. The two heads of the heterodimer are then connected by different ends of the cleavable RAD21 protein, forming a ring structure (By similarity).</text>
</comment>
<comment type="PTM">
    <text evidence="4">Phosphorylated at Ser-1083 in a SPO11-dependent manner.</text>
</comment>
<comment type="PTM">
    <text evidence="5">Acetylation at Lys-105 and Lys-106 by ESCO1 is important for genome stability and S phase sister chromatid cohesion. Regulated by DSCC1, it is required for processive DNA synthesis, coupling sister chromatid cohesion establishment during S phase to DNA replication (By similarity). Deacetylation by HDAC8, regulates release of the cohesin complex from chromatin (By similarity).</text>
</comment>
<comment type="PTM">
    <text evidence="5">Ubiquitinated by the DCX(DCAF15) complex, leading to its degradation.</text>
</comment>
<comment type="similarity">
    <text evidence="8">Belongs to the SMC family. SMC3 subfamily.</text>
</comment>
<dbReference type="EMBL" id="CR861241">
    <property type="protein sequence ID" value="CAH93311.1"/>
    <property type="molecule type" value="mRNA"/>
</dbReference>
<dbReference type="RefSeq" id="NP_001126947.1">
    <property type="nucleotide sequence ID" value="NM_001133475.1"/>
</dbReference>
<dbReference type="SMR" id="Q5R4K5"/>
<dbReference type="FunCoup" id="Q5R4K5">
    <property type="interactions" value="4159"/>
</dbReference>
<dbReference type="STRING" id="9601.ENSPPYP00000003081"/>
<dbReference type="Ensembl" id="ENSPPYT00000003185.3">
    <property type="protein sequence ID" value="ENSPPYP00000003081.2"/>
    <property type="gene ID" value="ENSPPYG00000002645.3"/>
</dbReference>
<dbReference type="GeneID" id="100173965"/>
<dbReference type="KEGG" id="pon:100173965"/>
<dbReference type="CTD" id="9126"/>
<dbReference type="eggNOG" id="KOG0964">
    <property type="taxonomic scope" value="Eukaryota"/>
</dbReference>
<dbReference type="GeneTree" id="ENSGT00580000081628"/>
<dbReference type="HOGENOM" id="CLU_001042_5_0_1"/>
<dbReference type="InParanoid" id="Q5R4K5"/>
<dbReference type="OMA" id="GQKTVCA"/>
<dbReference type="OrthoDB" id="431497at2759"/>
<dbReference type="TreeFam" id="TF105602"/>
<dbReference type="Proteomes" id="UP000001595">
    <property type="component" value="Chromosome 10"/>
</dbReference>
<dbReference type="GO" id="GO:0000785">
    <property type="term" value="C:chromatin"/>
    <property type="evidence" value="ECO:0000250"/>
    <property type="project" value="UniProtKB"/>
</dbReference>
<dbReference type="GO" id="GO:0000775">
    <property type="term" value="C:chromosome, centromeric region"/>
    <property type="evidence" value="ECO:0007669"/>
    <property type="project" value="UniProtKB-SubCell"/>
</dbReference>
<dbReference type="GO" id="GO:0000800">
    <property type="term" value="C:lateral element"/>
    <property type="evidence" value="ECO:0007669"/>
    <property type="project" value="Ensembl"/>
</dbReference>
<dbReference type="GO" id="GO:0030893">
    <property type="term" value="C:meiotic cohesin complex"/>
    <property type="evidence" value="ECO:0000250"/>
    <property type="project" value="UniProtKB"/>
</dbReference>
<dbReference type="GO" id="GO:0030892">
    <property type="term" value="C:mitotic cohesin complex"/>
    <property type="evidence" value="ECO:0007669"/>
    <property type="project" value="Ensembl"/>
</dbReference>
<dbReference type="GO" id="GO:0097431">
    <property type="term" value="C:mitotic spindle pole"/>
    <property type="evidence" value="ECO:0007669"/>
    <property type="project" value="Ensembl"/>
</dbReference>
<dbReference type="GO" id="GO:0016363">
    <property type="term" value="C:nuclear matrix"/>
    <property type="evidence" value="ECO:0007669"/>
    <property type="project" value="Ensembl"/>
</dbReference>
<dbReference type="GO" id="GO:0005654">
    <property type="term" value="C:nucleoplasm"/>
    <property type="evidence" value="ECO:0007669"/>
    <property type="project" value="Ensembl"/>
</dbReference>
<dbReference type="GO" id="GO:0005524">
    <property type="term" value="F:ATP binding"/>
    <property type="evidence" value="ECO:0007669"/>
    <property type="project" value="UniProtKB-KW"/>
</dbReference>
<dbReference type="GO" id="GO:0016887">
    <property type="term" value="F:ATP hydrolysis activity"/>
    <property type="evidence" value="ECO:0007669"/>
    <property type="project" value="InterPro"/>
</dbReference>
<dbReference type="GO" id="GO:0048487">
    <property type="term" value="F:beta-tubulin binding"/>
    <property type="evidence" value="ECO:0007669"/>
    <property type="project" value="Ensembl"/>
</dbReference>
<dbReference type="GO" id="GO:0003682">
    <property type="term" value="F:chromatin binding"/>
    <property type="evidence" value="ECO:0007669"/>
    <property type="project" value="Ensembl"/>
</dbReference>
<dbReference type="GO" id="GO:0000987">
    <property type="term" value="F:cis-regulatory region sequence-specific DNA binding"/>
    <property type="evidence" value="ECO:0007669"/>
    <property type="project" value="Ensembl"/>
</dbReference>
<dbReference type="GO" id="GO:0070840">
    <property type="term" value="F:dynein complex binding"/>
    <property type="evidence" value="ECO:0007669"/>
    <property type="project" value="Ensembl"/>
</dbReference>
<dbReference type="GO" id="GO:0036033">
    <property type="term" value="F:mediator complex binding"/>
    <property type="evidence" value="ECO:0007669"/>
    <property type="project" value="Ensembl"/>
</dbReference>
<dbReference type="GO" id="GO:0046982">
    <property type="term" value="F:protein heterodimerization activity"/>
    <property type="evidence" value="ECO:0007669"/>
    <property type="project" value="Ensembl"/>
</dbReference>
<dbReference type="GO" id="GO:0051301">
    <property type="term" value="P:cell division"/>
    <property type="evidence" value="ECO:0007669"/>
    <property type="project" value="UniProtKB-KW"/>
</dbReference>
<dbReference type="GO" id="GO:0006281">
    <property type="term" value="P:DNA repair"/>
    <property type="evidence" value="ECO:0007669"/>
    <property type="project" value="UniProtKB-KW"/>
</dbReference>
<dbReference type="GO" id="GO:0051321">
    <property type="term" value="P:meiotic cell cycle"/>
    <property type="evidence" value="ECO:0007669"/>
    <property type="project" value="UniProtKB-KW"/>
</dbReference>
<dbReference type="GO" id="GO:0090307">
    <property type="term" value="P:mitotic spindle assembly"/>
    <property type="evidence" value="ECO:0007669"/>
    <property type="project" value="Ensembl"/>
</dbReference>
<dbReference type="GO" id="GO:0006275">
    <property type="term" value="P:regulation of DNA replication"/>
    <property type="evidence" value="ECO:0000250"/>
    <property type="project" value="UniProtKB"/>
</dbReference>
<dbReference type="GO" id="GO:0007062">
    <property type="term" value="P:sister chromatid cohesion"/>
    <property type="evidence" value="ECO:0007669"/>
    <property type="project" value="Ensembl"/>
</dbReference>
<dbReference type="GO" id="GO:0019827">
    <property type="term" value="P:stem cell population maintenance"/>
    <property type="evidence" value="ECO:0007669"/>
    <property type="project" value="Ensembl"/>
</dbReference>
<dbReference type="CDD" id="cd03272">
    <property type="entry name" value="ABC_SMC3_euk"/>
    <property type="match status" value="1"/>
</dbReference>
<dbReference type="FunFam" id="1.20.1060.20:FF:000002">
    <property type="entry name" value="Structural maintenance of chromosomes 3"/>
    <property type="match status" value="1"/>
</dbReference>
<dbReference type="FunFam" id="3.30.70.1620:FF:000002">
    <property type="entry name" value="Structural maintenance of chromosomes 3"/>
    <property type="match status" value="1"/>
</dbReference>
<dbReference type="FunFam" id="3.40.50.300:FF:000370">
    <property type="entry name" value="Structural maintenance of chromosomes 3"/>
    <property type="match status" value="1"/>
</dbReference>
<dbReference type="FunFam" id="3.40.50.300:FF:000424">
    <property type="entry name" value="Structural maintenance of chromosomes 3"/>
    <property type="match status" value="1"/>
</dbReference>
<dbReference type="Gene3D" id="1.10.287.1490">
    <property type="match status" value="1"/>
</dbReference>
<dbReference type="Gene3D" id="1.20.1060.20">
    <property type="match status" value="1"/>
</dbReference>
<dbReference type="Gene3D" id="3.30.70.1620">
    <property type="match status" value="1"/>
</dbReference>
<dbReference type="Gene3D" id="3.40.50.300">
    <property type="entry name" value="P-loop containing nucleotide triphosphate hydrolases"/>
    <property type="match status" value="2"/>
</dbReference>
<dbReference type="InterPro" id="IPR027417">
    <property type="entry name" value="P-loop_NTPase"/>
</dbReference>
<dbReference type="InterPro" id="IPR003395">
    <property type="entry name" value="RecF/RecN/SMC_N"/>
</dbReference>
<dbReference type="InterPro" id="IPR024704">
    <property type="entry name" value="SMC"/>
</dbReference>
<dbReference type="InterPro" id="IPR041741">
    <property type="entry name" value="SMC3_ABC_euk"/>
</dbReference>
<dbReference type="InterPro" id="IPR010935">
    <property type="entry name" value="SMC_hinge"/>
</dbReference>
<dbReference type="InterPro" id="IPR036277">
    <property type="entry name" value="SMC_hinge_sf"/>
</dbReference>
<dbReference type="PANTHER" id="PTHR43977">
    <property type="entry name" value="STRUCTURAL MAINTENANCE OF CHROMOSOMES PROTEIN 3"/>
    <property type="match status" value="1"/>
</dbReference>
<dbReference type="Pfam" id="PF06470">
    <property type="entry name" value="SMC_hinge"/>
    <property type="match status" value="1"/>
</dbReference>
<dbReference type="Pfam" id="PF02463">
    <property type="entry name" value="SMC_N"/>
    <property type="match status" value="1"/>
</dbReference>
<dbReference type="PIRSF" id="PIRSF005719">
    <property type="entry name" value="SMC"/>
    <property type="match status" value="1"/>
</dbReference>
<dbReference type="SMART" id="SM00968">
    <property type="entry name" value="SMC_hinge"/>
    <property type="match status" value="1"/>
</dbReference>
<dbReference type="SUPFAM" id="SSF52540">
    <property type="entry name" value="P-loop containing nucleoside triphosphate hydrolases"/>
    <property type="match status" value="1"/>
</dbReference>
<dbReference type="SUPFAM" id="SSF75553">
    <property type="entry name" value="Smc hinge domain"/>
    <property type="match status" value="1"/>
</dbReference>
<proteinExistence type="evidence at transcript level"/>
<accession>Q5R4K5</accession>
<organism>
    <name type="scientific">Pongo abelii</name>
    <name type="common">Sumatran orangutan</name>
    <name type="synonym">Pongo pygmaeus abelii</name>
    <dbReference type="NCBI Taxonomy" id="9601"/>
    <lineage>
        <taxon>Eukaryota</taxon>
        <taxon>Metazoa</taxon>
        <taxon>Chordata</taxon>
        <taxon>Craniata</taxon>
        <taxon>Vertebrata</taxon>
        <taxon>Euteleostomi</taxon>
        <taxon>Mammalia</taxon>
        <taxon>Eutheria</taxon>
        <taxon>Euarchontoglires</taxon>
        <taxon>Primates</taxon>
        <taxon>Haplorrhini</taxon>
        <taxon>Catarrhini</taxon>
        <taxon>Hominidae</taxon>
        <taxon>Pongo</taxon>
    </lineage>
</organism>
<evidence type="ECO:0000250" key="1"/>
<evidence type="ECO:0000250" key="2">
    <source>
        <dbReference type="UniProtKB" id="O97594"/>
    </source>
</evidence>
<evidence type="ECO:0000250" key="3">
    <source>
        <dbReference type="UniProtKB" id="P97690"/>
    </source>
</evidence>
<evidence type="ECO:0000250" key="4">
    <source>
        <dbReference type="UniProtKB" id="Q9CW03"/>
    </source>
</evidence>
<evidence type="ECO:0000250" key="5">
    <source>
        <dbReference type="UniProtKB" id="Q9UQE7"/>
    </source>
</evidence>
<evidence type="ECO:0000255" key="6"/>
<evidence type="ECO:0000256" key="7">
    <source>
        <dbReference type="SAM" id="MobiDB-lite"/>
    </source>
</evidence>
<evidence type="ECO:0000305" key="8"/>
<keyword id="KW-0007">Acetylation</keyword>
<keyword id="KW-0067">ATP-binding</keyword>
<keyword id="KW-0131">Cell cycle</keyword>
<keyword id="KW-0132">Cell division</keyword>
<keyword id="KW-0137">Centromere</keyword>
<keyword id="KW-0158">Chromosome</keyword>
<keyword id="KW-0175">Coiled coil</keyword>
<keyword id="KW-0227">DNA damage</keyword>
<keyword id="KW-0234">DNA repair</keyword>
<keyword id="KW-0469">Meiosis</keyword>
<keyword id="KW-0498">Mitosis</keyword>
<keyword id="KW-0547">Nucleotide-binding</keyword>
<keyword id="KW-0539">Nucleus</keyword>
<keyword id="KW-0597">Phosphoprotein</keyword>
<keyword id="KW-1185">Reference proteome</keyword>
<keyword id="KW-0832">Ubl conjugation</keyword>
<gene>
    <name type="primary">SMC3</name>
    <name type="synonym">CSPG6</name>
</gene>
<sequence length="1217" mass="141542">MYIKQVIIQGFRSYRDQTIVDPFSSKHNVIVGRNGSGKSNFFYAIQFVLSDEFSHLRPEQRLALLHEGTGPRVISAFVEIIFDNSDNRLPIDKEEVSLRRVIGAKKDQYFLDKKMVTKNDVMNLLESAGFSRSNPYYIVKQGKINQMATAPDSQRLKLLREVAGTRVYDERKEESISLMKETEGKREKINELLKYIEERLHTLEEEKEELAQYQKWDKMRRALEYTIYNQELNETRAKLDELSAKRETSGEKSRQLRDAQQDARDKMEDIERQVRELKTKISAMKEEKEQLSAERQEQIKQRTKLELKAKDLQDELAGNSEQRKRLLKERQKLLEKIEEKQKELAETEPKFNSVKEKEERGIARLAQATQERTDLYAKQGRGSQFTSKEERDKWIKKELKSLDQAINDKKRQIAAIHKDLEDTEANKEKNLEQYNKLDQDLNEVKARVEELDRKYYEVKNKKDELQSERNYLWREENAEQQALAAKREDLEKKQQLLRAATGKAILNGIDSINKVLDHFRRKGINQHVQNGYHGIVMNNFECEPAFYTCVEVTAGNRLFYHIVDSDEVSTKILMEFNKMNLPGEVTFLPLNKLDVRDTAYPETNDAIPMISKLRYNPRFDKAFKHVFGKTLICRSMEVSTQLARAFTMDCITLEGDQVSHRGALTGGYYDTRKSRLELQKDVRKAEEELGELEAKLNENLRRNIERINNEIDQLMNQMQQIETQQRKFKASRDSILSEMKMLKEKRQQSEKTFMPKQRSLQSLEASLHAMESTRESLKAELGTDLLSQLSLEDQKRVDALNDEIRQLQQENRQLLNERIKLEGIITRVETYLNENLRKRLDQVEQELNELRETEGGTVLTATTSELEAINKRVKDTMARSEDLDNSIDKTEAGIKELQKSMERWKNMEKEHMDAINHDTKELEKMTNRQGMLLKKKEECMKKIRELGSLPQEAFEKYQTLSLKQLFRKLEQCNTELKKYSHVNKKALDQFVNFSEQKEKLIKRQEELDRGYKSIMELMNVLELRKYEAIQLTFKQVSKNFSEVFQKLVPGGKATLVMKKGDVEGSQSQDEGEGSGESERGSGSQSSVPSVDQFTGVGIRVSFTGKQGEMREMQQLSGGQKSLVALALIFAIQKCDPAPFYLFDEIDQALDAQHRKAVSDMIMELAVHAQFITTTFRPELLESADKFYGVKFRNKVSHIDVITAEMAKDFVEDDTTHG</sequence>